<comment type="function">
    <text evidence="1">One of the primary rRNA binding proteins, it binds directly to 16S rRNA where it nucleates assembly of the body of the 30S subunit.</text>
</comment>
<comment type="function">
    <text evidence="1">With S5 and S12 plays an important role in translational accuracy.</text>
</comment>
<comment type="subunit">
    <text evidence="1">Part of the 30S ribosomal subunit. Contacts protein S5. The interaction surface between S4 and S5 is involved in control of translational fidelity.</text>
</comment>
<comment type="similarity">
    <text evidence="1">Belongs to the universal ribosomal protein uS4 family.</text>
</comment>
<sequence>MARYLGPKLKLSRREGTDLFLKSGVRAIDSKCKIDTAPGQHGARKPRLSDYGVQLREKQKVRRIYGILEKQFRNYYREATRLKGNTGENLLQLLEGRLDNVVYRMGFATTRAEARQLVSHKAIVVNGKVVNIPSSQVSPEDVVTVREKAKKQARIKAALDLAAQREKPTWIEINADKMEGVYKRLPERSDLSADINEQLIVELYSK</sequence>
<name>RS4_TOLAT</name>
<proteinExistence type="inferred from homology"/>
<evidence type="ECO:0000255" key="1">
    <source>
        <dbReference type="HAMAP-Rule" id="MF_01306"/>
    </source>
</evidence>
<evidence type="ECO:0000305" key="2"/>
<feature type="chain" id="PRO_1000214312" description="Small ribosomal subunit protein uS4">
    <location>
        <begin position="1"/>
        <end position="206"/>
    </location>
</feature>
<feature type="domain" description="S4 RNA-binding" evidence="1">
    <location>
        <begin position="96"/>
        <end position="156"/>
    </location>
</feature>
<dbReference type="EMBL" id="CP001616">
    <property type="protein sequence ID" value="ACQ91753.1"/>
    <property type="molecule type" value="Genomic_DNA"/>
</dbReference>
<dbReference type="RefSeq" id="WP_012728352.1">
    <property type="nucleotide sequence ID" value="NC_012691.1"/>
</dbReference>
<dbReference type="SMR" id="C4L7V4"/>
<dbReference type="STRING" id="595494.Tola_0123"/>
<dbReference type="KEGG" id="tau:Tola_0123"/>
<dbReference type="eggNOG" id="COG0522">
    <property type="taxonomic scope" value="Bacteria"/>
</dbReference>
<dbReference type="HOGENOM" id="CLU_092403_0_2_6"/>
<dbReference type="OrthoDB" id="9803672at2"/>
<dbReference type="Proteomes" id="UP000009073">
    <property type="component" value="Chromosome"/>
</dbReference>
<dbReference type="GO" id="GO:0015935">
    <property type="term" value="C:small ribosomal subunit"/>
    <property type="evidence" value="ECO:0007669"/>
    <property type="project" value="InterPro"/>
</dbReference>
<dbReference type="GO" id="GO:0019843">
    <property type="term" value="F:rRNA binding"/>
    <property type="evidence" value="ECO:0007669"/>
    <property type="project" value="UniProtKB-UniRule"/>
</dbReference>
<dbReference type="GO" id="GO:0003735">
    <property type="term" value="F:structural constituent of ribosome"/>
    <property type="evidence" value="ECO:0007669"/>
    <property type="project" value="InterPro"/>
</dbReference>
<dbReference type="GO" id="GO:0042274">
    <property type="term" value="P:ribosomal small subunit biogenesis"/>
    <property type="evidence" value="ECO:0007669"/>
    <property type="project" value="TreeGrafter"/>
</dbReference>
<dbReference type="GO" id="GO:0006412">
    <property type="term" value="P:translation"/>
    <property type="evidence" value="ECO:0007669"/>
    <property type="project" value="UniProtKB-UniRule"/>
</dbReference>
<dbReference type="CDD" id="cd00165">
    <property type="entry name" value="S4"/>
    <property type="match status" value="1"/>
</dbReference>
<dbReference type="FunFam" id="1.10.1050.10:FF:000001">
    <property type="entry name" value="30S ribosomal protein S4"/>
    <property type="match status" value="1"/>
</dbReference>
<dbReference type="FunFam" id="3.10.290.10:FF:000001">
    <property type="entry name" value="30S ribosomal protein S4"/>
    <property type="match status" value="1"/>
</dbReference>
<dbReference type="Gene3D" id="1.10.1050.10">
    <property type="entry name" value="Ribosomal Protein S4 Delta 41, Chain A, domain 1"/>
    <property type="match status" value="1"/>
</dbReference>
<dbReference type="Gene3D" id="3.10.290.10">
    <property type="entry name" value="RNA-binding S4 domain"/>
    <property type="match status" value="1"/>
</dbReference>
<dbReference type="HAMAP" id="MF_01306_B">
    <property type="entry name" value="Ribosomal_uS4_B"/>
    <property type="match status" value="1"/>
</dbReference>
<dbReference type="InterPro" id="IPR022801">
    <property type="entry name" value="Ribosomal_uS4"/>
</dbReference>
<dbReference type="InterPro" id="IPR005709">
    <property type="entry name" value="Ribosomal_uS4_bac-type"/>
</dbReference>
<dbReference type="InterPro" id="IPR018079">
    <property type="entry name" value="Ribosomal_uS4_CS"/>
</dbReference>
<dbReference type="InterPro" id="IPR001912">
    <property type="entry name" value="Ribosomal_uS4_N"/>
</dbReference>
<dbReference type="InterPro" id="IPR002942">
    <property type="entry name" value="S4_RNA-bd"/>
</dbReference>
<dbReference type="InterPro" id="IPR036986">
    <property type="entry name" value="S4_RNA-bd_sf"/>
</dbReference>
<dbReference type="NCBIfam" id="NF003717">
    <property type="entry name" value="PRK05327.1"/>
    <property type="match status" value="1"/>
</dbReference>
<dbReference type="NCBIfam" id="TIGR01017">
    <property type="entry name" value="rpsD_bact"/>
    <property type="match status" value="1"/>
</dbReference>
<dbReference type="PANTHER" id="PTHR11831">
    <property type="entry name" value="30S 40S RIBOSOMAL PROTEIN"/>
    <property type="match status" value="1"/>
</dbReference>
<dbReference type="PANTHER" id="PTHR11831:SF4">
    <property type="entry name" value="SMALL RIBOSOMAL SUBUNIT PROTEIN US4M"/>
    <property type="match status" value="1"/>
</dbReference>
<dbReference type="Pfam" id="PF00163">
    <property type="entry name" value="Ribosomal_S4"/>
    <property type="match status" value="1"/>
</dbReference>
<dbReference type="Pfam" id="PF01479">
    <property type="entry name" value="S4"/>
    <property type="match status" value="1"/>
</dbReference>
<dbReference type="SMART" id="SM01390">
    <property type="entry name" value="Ribosomal_S4"/>
    <property type="match status" value="1"/>
</dbReference>
<dbReference type="SMART" id="SM00363">
    <property type="entry name" value="S4"/>
    <property type="match status" value="1"/>
</dbReference>
<dbReference type="SUPFAM" id="SSF55174">
    <property type="entry name" value="Alpha-L RNA-binding motif"/>
    <property type="match status" value="1"/>
</dbReference>
<dbReference type="PROSITE" id="PS00632">
    <property type="entry name" value="RIBOSOMAL_S4"/>
    <property type="match status" value="1"/>
</dbReference>
<dbReference type="PROSITE" id="PS50889">
    <property type="entry name" value="S4"/>
    <property type="match status" value="1"/>
</dbReference>
<gene>
    <name evidence="1" type="primary">rpsD</name>
    <name type="ordered locus">Tola_0123</name>
</gene>
<organism>
    <name type="scientific">Tolumonas auensis (strain DSM 9187 / NBRC 110442 / TA 4)</name>
    <dbReference type="NCBI Taxonomy" id="595494"/>
    <lineage>
        <taxon>Bacteria</taxon>
        <taxon>Pseudomonadati</taxon>
        <taxon>Pseudomonadota</taxon>
        <taxon>Gammaproteobacteria</taxon>
        <taxon>Aeromonadales</taxon>
        <taxon>Aeromonadaceae</taxon>
        <taxon>Tolumonas</taxon>
    </lineage>
</organism>
<keyword id="KW-1185">Reference proteome</keyword>
<keyword id="KW-0687">Ribonucleoprotein</keyword>
<keyword id="KW-0689">Ribosomal protein</keyword>
<keyword id="KW-0694">RNA-binding</keyword>
<keyword id="KW-0699">rRNA-binding</keyword>
<protein>
    <recommendedName>
        <fullName evidence="1">Small ribosomal subunit protein uS4</fullName>
    </recommendedName>
    <alternativeName>
        <fullName evidence="2">30S ribosomal protein S4</fullName>
    </alternativeName>
</protein>
<reference key="1">
    <citation type="submission" date="2009-05" db="EMBL/GenBank/DDBJ databases">
        <title>Complete sequence of Tolumonas auensis DSM 9187.</title>
        <authorList>
            <consortium name="US DOE Joint Genome Institute"/>
            <person name="Lucas S."/>
            <person name="Copeland A."/>
            <person name="Lapidus A."/>
            <person name="Glavina del Rio T."/>
            <person name="Tice H."/>
            <person name="Bruce D."/>
            <person name="Goodwin L."/>
            <person name="Pitluck S."/>
            <person name="Chertkov O."/>
            <person name="Brettin T."/>
            <person name="Detter J.C."/>
            <person name="Han C."/>
            <person name="Larimer F."/>
            <person name="Land M."/>
            <person name="Hauser L."/>
            <person name="Kyrpides N."/>
            <person name="Mikhailova N."/>
            <person name="Spring S."/>
            <person name="Beller H."/>
        </authorList>
    </citation>
    <scope>NUCLEOTIDE SEQUENCE [LARGE SCALE GENOMIC DNA]</scope>
    <source>
        <strain>DSM 9187 / NBRC 110442 / TA 4</strain>
    </source>
</reference>
<accession>C4L7V4</accession>